<reference key="1">
    <citation type="submission" date="2008-10" db="EMBL/GenBank/DDBJ databases">
        <title>Genome sequence of Bacillus cereus B4264.</title>
        <authorList>
            <person name="Dodson R.J."/>
            <person name="Durkin A.S."/>
            <person name="Rosovitz M.J."/>
            <person name="Rasko D.A."/>
            <person name="Hoffmaster A."/>
            <person name="Ravel J."/>
            <person name="Sutton G."/>
        </authorList>
    </citation>
    <scope>NUCLEOTIDE SEQUENCE [LARGE SCALE GENOMIC DNA]</scope>
    <source>
        <strain>B4264</strain>
    </source>
</reference>
<feature type="chain" id="PRO_1000135790" description="3-isopropylmalate dehydratase small subunit">
    <location>
        <begin position="1"/>
        <end position="193"/>
    </location>
</feature>
<protein>
    <recommendedName>
        <fullName evidence="1">3-isopropylmalate dehydratase small subunit</fullName>
        <ecNumber evidence="1">4.2.1.33</ecNumber>
    </recommendedName>
    <alternativeName>
        <fullName evidence="1">Alpha-IPM isomerase</fullName>
        <shortName evidence="1">IPMI</shortName>
    </alternativeName>
    <alternativeName>
        <fullName evidence="1">Isopropylmalate isomerase</fullName>
    </alternativeName>
</protein>
<comment type="function">
    <text evidence="1">Catalyzes the isomerization between 2-isopropylmalate and 3-isopropylmalate, via the formation of 2-isopropylmaleate.</text>
</comment>
<comment type="catalytic activity">
    <reaction evidence="1">
        <text>(2R,3S)-3-isopropylmalate = (2S)-2-isopropylmalate</text>
        <dbReference type="Rhea" id="RHEA:32287"/>
        <dbReference type="ChEBI" id="CHEBI:1178"/>
        <dbReference type="ChEBI" id="CHEBI:35121"/>
        <dbReference type="EC" id="4.2.1.33"/>
    </reaction>
</comment>
<comment type="pathway">
    <text evidence="1">Amino-acid biosynthesis; L-leucine biosynthesis; L-leucine from 3-methyl-2-oxobutanoate: step 2/4.</text>
</comment>
<comment type="subunit">
    <text evidence="1">Heterodimer of LeuC and LeuD.</text>
</comment>
<comment type="similarity">
    <text evidence="1">Belongs to the LeuD family. LeuD type 1 subfamily.</text>
</comment>
<dbReference type="EC" id="4.2.1.33" evidence="1"/>
<dbReference type="EMBL" id="CP001176">
    <property type="protein sequence ID" value="ACK64011.1"/>
    <property type="molecule type" value="Genomic_DNA"/>
</dbReference>
<dbReference type="RefSeq" id="WP_000433189.1">
    <property type="nucleotide sequence ID" value="NZ_VEHB01000003.1"/>
</dbReference>
<dbReference type="SMR" id="B7HHF8"/>
<dbReference type="KEGG" id="bcb:BCB4264_A1456"/>
<dbReference type="HOGENOM" id="CLU_081378_0_3_9"/>
<dbReference type="UniPathway" id="UPA00048">
    <property type="reaction ID" value="UER00071"/>
</dbReference>
<dbReference type="Proteomes" id="UP000007096">
    <property type="component" value="Chromosome"/>
</dbReference>
<dbReference type="GO" id="GO:0009316">
    <property type="term" value="C:3-isopropylmalate dehydratase complex"/>
    <property type="evidence" value="ECO:0007669"/>
    <property type="project" value="InterPro"/>
</dbReference>
<dbReference type="GO" id="GO:0003861">
    <property type="term" value="F:3-isopropylmalate dehydratase activity"/>
    <property type="evidence" value="ECO:0007669"/>
    <property type="project" value="UniProtKB-UniRule"/>
</dbReference>
<dbReference type="GO" id="GO:0009098">
    <property type="term" value="P:L-leucine biosynthetic process"/>
    <property type="evidence" value="ECO:0007669"/>
    <property type="project" value="UniProtKB-UniRule"/>
</dbReference>
<dbReference type="CDD" id="cd01577">
    <property type="entry name" value="IPMI_Swivel"/>
    <property type="match status" value="1"/>
</dbReference>
<dbReference type="FunFam" id="3.20.19.10:FF:000003">
    <property type="entry name" value="3-isopropylmalate dehydratase small subunit"/>
    <property type="match status" value="1"/>
</dbReference>
<dbReference type="Gene3D" id="3.20.19.10">
    <property type="entry name" value="Aconitase, domain 4"/>
    <property type="match status" value="1"/>
</dbReference>
<dbReference type="HAMAP" id="MF_01031">
    <property type="entry name" value="LeuD_type1"/>
    <property type="match status" value="1"/>
</dbReference>
<dbReference type="InterPro" id="IPR004431">
    <property type="entry name" value="3-IsopropMal_deHydase_ssu"/>
</dbReference>
<dbReference type="InterPro" id="IPR015928">
    <property type="entry name" value="Aconitase/3IPM_dehydase_swvl"/>
</dbReference>
<dbReference type="InterPro" id="IPR000573">
    <property type="entry name" value="AconitaseA/IPMdHydase_ssu_swvl"/>
</dbReference>
<dbReference type="InterPro" id="IPR033940">
    <property type="entry name" value="IPMI_Swivel"/>
</dbReference>
<dbReference type="InterPro" id="IPR050075">
    <property type="entry name" value="LeuD"/>
</dbReference>
<dbReference type="NCBIfam" id="TIGR00171">
    <property type="entry name" value="leuD"/>
    <property type="match status" value="1"/>
</dbReference>
<dbReference type="NCBIfam" id="NF002458">
    <property type="entry name" value="PRK01641.1"/>
    <property type="match status" value="1"/>
</dbReference>
<dbReference type="PANTHER" id="PTHR43345:SF5">
    <property type="entry name" value="3-ISOPROPYLMALATE DEHYDRATASE SMALL SUBUNIT"/>
    <property type="match status" value="1"/>
</dbReference>
<dbReference type="PANTHER" id="PTHR43345">
    <property type="entry name" value="3-ISOPROPYLMALATE DEHYDRATASE SMALL SUBUNIT 2-RELATED-RELATED"/>
    <property type="match status" value="1"/>
</dbReference>
<dbReference type="Pfam" id="PF00694">
    <property type="entry name" value="Aconitase_C"/>
    <property type="match status" value="1"/>
</dbReference>
<dbReference type="SUPFAM" id="SSF52016">
    <property type="entry name" value="LeuD/IlvD-like"/>
    <property type="match status" value="1"/>
</dbReference>
<sequence length="193" mass="22590">MEPFRIHKGTAAVLMNDNIDTDQIIPKQYLKRIERTGFGKFLFDEWRYDNNRQENPNFPLNAQERKGASILITGDNFGCGSSREHAPWALADYGFRVIIAGGFADIFYMNCMKNGMLPIVMDKDMREQLAKTDAREQITVDLENEIMTTNTHRFHFTIEKMWKEKLLNGLDEISITMQYEQEIKEYERKVALH</sequence>
<gene>
    <name evidence="1" type="primary">leuD</name>
    <name type="ordered locus">BCB4264_A1456</name>
</gene>
<accession>B7HHF8</accession>
<organism>
    <name type="scientific">Bacillus cereus (strain B4264)</name>
    <dbReference type="NCBI Taxonomy" id="405532"/>
    <lineage>
        <taxon>Bacteria</taxon>
        <taxon>Bacillati</taxon>
        <taxon>Bacillota</taxon>
        <taxon>Bacilli</taxon>
        <taxon>Bacillales</taxon>
        <taxon>Bacillaceae</taxon>
        <taxon>Bacillus</taxon>
        <taxon>Bacillus cereus group</taxon>
    </lineage>
</organism>
<proteinExistence type="inferred from homology"/>
<name>LEUD_BACC4</name>
<evidence type="ECO:0000255" key="1">
    <source>
        <dbReference type="HAMAP-Rule" id="MF_01031"/>
    </source>
</evidence>
<keyword id="KW-0028">Amino-acid biosynthesis</keyword>
<keyword id="KW-0100">Branched-chain amino acid biosynthesis</keyword>
<keyword id="KW-0432">Leucine biosynthesis</keyword>
<keyword id="KW-0456">Lyase</keyword>